<proteinExistence type="inferred from homology"/>
<evidence type="ECO:0000255" key="1">
    <source>
        <dbReference type="HAMAP-Rule" id="MF_01417"/>
    </source>
</evidence>
<protein>
    <recommendedName>
        <fullName evidence="1">Biosynthetic arginine decarboxylase</fullName>
        <shortName evidence="1">ADC</shortName>
        <ecNumber evidence="1">4.1.1.19</ecNumber>
    </recommendedName>
</protein>
<name>SPEA_VIBVU</name>
<comment type="function">
    <text evidence="1">Catalyzes the biosynthesis of agmatine from arginine.</text>
</comment>
<comment type="catalytic activity">
    <reaction evidence="1">
        <text>L-arginine + H(+) = agmatine + CO2</text>
        <dbReference type="Rhea" id="RHEA:17641"/>
        <dbReference type="ChEBI" id="CHEBI:15378"/>
        <dbReference type="ChEBI" id="CHEBI:16526"/>
        <dbReference type="ChEBI" id="CHEBI:32682"/>
        <dbReference type="ChEBI" id="CHEBI:58145"/>
        <dbReference type="EC" id="4.1.1.19"/>
    </reaction>
</comment>
<comment type="cofactor">
    <cofactor evidence="1">
        <name>Mg(2+)</name>
        <dbReference type="ChEBI" id="CHEBI:18420"/>
    </cofactor>
</comment>
<comment type="cofactor">
    <cofactor evidence="1">
        <name>pyridoxal 5'-phosphate</name>
        <dbReference type="ChEBI" id="CHEBI:597326"/>
    </cofactor>
</comment>
<comment type="similarity">
    <text evidence="1">Belongs to the Orn/Lys/Arg decarboxylase class-II family. SpeA subfamily.</text>
</comment>
<feature type="chain" id="PRO_0000149985" description="Biosynthetic arginine decarboxylase">
    <location>
        <begin position="1"/>
        <end position="640"/>
    </location>
</feature>
<feature type="binding site" evidence="1">
    <location>
        <begin position="290"/>
        <end position="300"/>
    </location>
    <ligand>
        <name>substrate</name>
    </ligand>
</feature>
<feature type="modified residue" description="N6-(pyridoxal phosphate)lysine" evidence="1">
    <location>
        <position position="105"/>
    </location>
</feature>
<gene>
    <name evidence="1" type="primary">speA</name>
    <name type="ordered locus">VV1_2356</name>
</gene>
<organism>
    <name type="scientific">Vibrio vulnificus (strain CMCP6)</name>
    <dbReference type="NCBI Taxonomy" id="216895"/>
    <lineage>
        <taxon>Bacteria</taxon>
        <taxon>Pseudomonadati</taxon>
        <taxon>Pseudomonadota</taxon>
        <taxon>Gammaproteobacteria</taxon>
        <taxon>Vibrionales</taxon>
        <taxon>Vibrionaceae</taxon>
        <taxon>Vibrio</taxon>
    </lineage>
</organism>
<keyword id="KW-0210">Decarboxylase</keyword>
<keyword id="KW-0456">Lyase</keyword>
<keyword id="KW-0460">Magnesium</keyword>
<keyword id="KW-0479">Metal-binding</keyword>
<keyword id="KW-0620">Polyamine biosynthesis</keyword>
<keyword id="KW-0663">Pyridoxal phosphate</keyword>
<keyword id="KW-0745">Spermidine biosynthesis</keyword>
<sequence length="640" mass="72493">MRLDVEQTSKLDRVRADYNVHYWSQGFYGIDDQGEMYVSPRSDNAHQIQLSKIVKQLEERQLNVPVLVRFPQILHQRVHSICDAFNQAIEEYQYPNKYLLVYPIKVNQQREVVDEILASQAQLETKQLGLEAGSKPELLAVLAMAQHASSVIVCNGYKDREYIRLALIGEKLGHKVFIVLEKMSELDLVLREAKSLGVTPRLGIRIRLASQGAGKWQASGGEKSKFGLSASQVLNVISRLKKENQLDTLQLVHFHLGSQMANIRDVRNGVNESARFYCELRTLGANITYFDVGGGLAIDYDGTRSQSSNSMNYGLVEYARNIVNTVGDVCKDYKQPMPVIISESGRSLTAHHAVLISNVIGTETYKPETVTEPEEDFPLLLNNMWRSWLNLHNGTDARALIEIYNDTQSDLAEVHSQFATGVLTLEHRAWAEQTSLRIYYELNRLMSTKNRFHRPILDELSERLADKFFVNFSLFQSLPDSWGIDQVFPVLPLSGLQNAADRRAVMLDITCDSDGAIDAYVDGQGIESTLPVPAWNEDEPYLMGFFLVGAYQEILGDMHNLFGDTHSVVVNVGDQGEINIDFINEGDTVEDMMRYVHIDVDQIRKNYHSLVSQRVDQEEQQQILAELEQGLSGYTYLEDF</sequence>
<reference key="1">
    <citation type="submission" date="2002-12" db="EMBL/GenBank/DDBJ databases">
        <title>Complete genome sequence of Vibrio vulnificus CMCP6.</title>
        <authorList>
            <person name="Rhee J.H."/>
            <person name="Kim S.Y."/>
            <person name="Chung S.S."/>
            <person name="Kim J.J."/>
            <person name="Moon Y.H."/>
            <person name="Jeong H."/>
            <person name="Choy H.E."/>
        </authorList>
    </citation>
    <scope>NUCLEOTIDE SEQUENCE [LARGE SCALE GENOMIC DNA]</scope>
    <source>
        <strain>CMCP6</strain>
    </source>
</reference>
<reference key="2">
    <citation type="journal article" date="2011" name="Mol. Syst. Biol.">
        <title>Integrative genome-scale metabolic analysis of Vibrio vulnificus for drug targeting and discovery.</title>
        <authorList>
            <person name="Kim H.U."/>
            <person name="Kim S.Y."/>
            <person name="Jeong H."/>
            <person name="Kim T.Y."/>
            <person name="Kim J.J."/>
            <person name="Choy H.E."/>
            <person name="Yi K.Y."/>
            <person name="Rhee J.H."/>
            <person name="Lee S.Y."/>
        </authorList>
    </citation>
    <scope>SEQUENCE REVISION</scope>
    <source>
        <strain>CMCP6</strain>
    </source>
</reference>
<accession>Q8DA54</accession>
<dbReference type="EC" id="4.1.1.19" evidence="1"/>
<dbReference type="EMBL" id="AE016795">
    <property type="protein sequence ID" value="AAO10730.2"/>
    <property type="molecule type" value="Genomic_DNA"/>
</dbReference>
<dbReference type="SMR" id="Q8DA54"/>
<dbReference type="KEGG" id="vvu:VV1_2356"/>
<dbReference type="HOGENOM" id="CLU_027243_1_0_6"/>
<dbReference type="SABIO-RK" id="Q8DA54"/>
<dbReference type="Proteomes" id="UP000002275">
    <property type="component" value="Chromosome 1"/>
</dbReference>
<dbReference type="GO" id="GO:0008792">
    <property type="term" value="F:arginine decarboxylase activity"/>
    <property type="evidence" value="ECO:0007669"/>
    <property type="project" value="UniProtKB-UniRule"/>
</dbReference>
<dbReference type="GO" id="GO:0046872">
    <property type="term" value="F:metal ion binding"/>
    <property type="evidence" value="ECO:0007669"/>
    <property type="project" value="UniProtKB-KW"/>
</dbReference>
<dbReference type="GO" id="GO:0006527">
    <property type="term" value="P:arginine catabolic process"/>
    <property type="evidence" value="ECO:0007669"/>
    <property type="project" value="InterPro"/>
</dbReference>
<dbReference type="GO" id="GO:0033388">
    <property type="term" value="P:putrescine biosynthetic process from arginine"/>
    <property type="evidence" value="ECO:0007669"/>
    <property type="project" value="TreeGrafter"/>
</dbReference>
<dbReference type="GO" id="GO:0008295">
    <property type="term" value="P:spermidine biosynthetic process"/>
    <property type="evidence" value="ECO:0007669"/>
    <property type="project" value="UniProtKB-UniRule"/>
</dbReference>
<dbReference type="CDD" id="cd06830">
    <property type="entry name" value="PLPDE_III_ADC"/>
    <property type="match status" value="1"/>
</dbReference>
<dbReference type="FunFam" id="1.10.287.3440:FF:000001">
    <property type="entry name" value="Biosynthetic arginine decarboxylase"/>
    <property type="match status" value="1"/>
</dbReference>
<dbReference type="FunFam" id="2.40.37.10:FF:000001">
    <property type="entry name" value="Biosynthetic arginine decarboxylase"/>
    <property type="match status" value="1"/>
</dbReference>
<dbReference type="FunFam" id="3.20.20.10:FF:000001">
    <property type="entry name" value="Biosynthetic arginine decarboxylase"/>
    <property type="match status" value="1"/>
</dbReference>
<dbReference type="Gene3D" id="1.10.287.3440">
    <property type="match status" value="1"/>
</dbReference>
<dbReference type="Gene3D" id="1.20.58.930">
    <property type="match status" value="1"/>
</dbReference>
<dbReference type="Gene3D" id="3.20.20.10">
    <property type="entry name" value="Alanine racemase"/>
    <property type="match status" value="1"/>
</dbReference>
<dbReference type="Gene3D" id="2.40.37.10">
    <property type="entry name" value="Lyase, Ornithine Decarboxylase, Chain A, domain 1"/>
    <property type="match status" value="1"/>
</dbReference>
<dbReference type="HAMAP" id="MF_01417">
    <property type="entry name" value="SpeA"/>
    <property type="match status" value="1"/>
</dbReference>
<dbReference type="InterPro" id="IPR009006">
    <property type="entry name" value="Ala_racemase/Decarboxylase_C"/>
</dbReference>
<dbReference type="InterPro" id="IPR040634">
    <property type="entry name" value="Arg_decarb_HB"/>
</dbReference>
<dbReference type="InterPro" id="IPR041128">
    <property type="entry name" value="Arg_decarbox_C"/>
</dbReference>
<dbReference type="InterPro" id="IPR002985">
    <property type="entry name" value="Arg_decrbxlase"/>
</dbReference>
<dbReference type="InterPro" id="IPR022644">
    <property type="entry name" value="De-COase2_N"/>
</dbReference>
<dbReference type="InterPro" id="IPR000183">
    <property type="entry name" value="Orn/DAP/Arg_de-COase"/>
</dbReference>
<dbReference type="InterPro" id="IPR029066">
    <property type="entry name" value="PLP-binding_barrel"/>
</dbReference>
<dbReference type="NCBIfam" id="NF003763">
    <property type="entry name" value="PRK05354.1"/>
    <property type="match status" value="1"/>
</dbReference>
<dbReference type="NCBIfam" id="TIGR01273">
    <property type="entry name" value="speA"/>
    <property type="match status" value="1"/>
</dbReference>
<dbReference type="PANTHER" id="PTHR43295">
    <property type="entry name" value="ARGININE DECARBOXYLASE"/>
    <property type="match status" value="1"/>
</dbReference>
<dbReference type="PANTHER" id="PTHR43295:SF9">
    <property type="entry name" value="BIOSYNTHETIC ARGININE DECARBOXYLASE"/>
    <property type="match status" value="1"/>
</dbReference>
<dbReference type="Pfam" id="PF17810">
    <property type="entry name" value="Arg_decarb_HB"/>
    <property type="match status" value="1"/>
</dbReference>
<dbReference type="Pfam" id="PF17944">
    <property type="entry name" value="Arg_decarbox_C"/>
    <property type="match status" value="1"/>
</dbReference>
<dbReference type="Pfam" id="PF02784">
    <property type="entry name" value="Orn_Arg_deC_N"/>
    <property type="match status" value="1"/>
</dbReference>
<dbReference type="PIRSF" id="PIRSF001336">
    <property type="entry name" value="Arg_decrbxlase"/>
    <property type="match status" value="1"/>
</dbReference>
<dbReference type="PRINTS" id="PR01180">
    <property type="entry name" value="ARGDCRBXLASE"/>
</dbReference>
<dbReference type="PRINTS" id="PR01179">
    <property type="entry name" value="ODADCRBXLASE"/>
</dbReference>
<dbReference type="SUPFAM" id="SSF51419">
    <property type="entry name" value="PLP-binding barrel"/>
    <property type="match status" value="1"/>
</dbReference>